<name>ME3L1_HUMAN</name>
<evidence type="ECO:0000255" key="1"/>
<evidence type="ECO:0000255" key="2">
    <source>
        <dbReference type="PROSITE-ProRule" id="PRU00108"/>
    </source>
</evidence>
<evidence type="ECO:0000256" key="3">
    <source>
        <dbReference type="SAM" id="MobiDB-lite"/>
    </source>
</evidence>
<evidence type="ECO:0000305" key="4"/>
<dbReference type="EMBL" id="AC015922">
    <property type="status" value="NOT_ANNOTATED_CDS"/>
    <property type="molecule type" value="Genomic_DNA"/>
</dbReference>
<dbReference type="SMR" id="A6NDR6"/>
<dbReference type="FunCoup" id="A6NDR6">
    <property type="interactions" value="7"/>
</dbReference>
<dbReference type="IntAct" id="A6NDR6">
    <property type="interactions" value="2"/>
</dbReference>
<dbReference type="BioMuta" id="HGNC:7002"/>
<dbReference type="jPOST" id="A6NDR6"/>
<dbReference type="MassIVE" id="A6NDR6"/>
<dbReference type="PeptideAtlas" id="A6NDR6"/>
<dbReference type="ProteomicsDB" id="923"/>
<dbReference type="Pumba" id="A6NDR6"/>
<dbReference type="AGR" id="HGNC:7002"/>
<dbReference type="GeneCards" id="MEIS3P1"/>
<dbReference type="HGNC" id="HGNC:7002">
    <property type="gene designation" value="MEIS3P1"/>
</dbReference>
<dbReference type="neXtProt" id="NX_A6NDR6"/>
<dbReference type="InParanoid" id="A6NDR6"/>
<dbReference type="PAN-GO" id="A6NDR6">
    <property type="GO annotations" value="8 GO annotations based on evolutionary models"/>
</dbReference>
<dbReference type="PathwayCommons" id="A6NDR6"/>
<dbReference type="Pharos" id="A6NDR6">
    <property type="development level" value="Tdark"/>
</dbReference>
<dbReference type="Proteomes" id="UP000005640">
    <property type="component" value="Unplaced"/>
</dbReference>
<dbReference type="RNAct" id="A6NDR6">
    <property type="molecule type" value="protein"/>
</dbReference>
<dbReference type="GO" id="GO:0005634">
    <property type="term" value="C:nucleus"/>
    <property type="evidence" value="ECO:0007669"/>
    <property type="project" value="UniProtKB-SubCell"/>
</dbReference>
<dbReference type="GO" id="GO:0003677">
    <property type="term" value="F:DNA binding"/>
    <property type="evidence" value="ECO:0007669"/>
    <property type="project" value="UniProtKB-KW"/>
</dbReference>
<dbReference type="GO" id="GO:0001228">
    <property type="term" value="F:DNA-binding transcription activator activity, RNA polymerase II-specific"/>
    <property type="evidence" value="ECO:0000318"/>
    <property type="project" value="GO_Central"/>
</dbReference>
<dbReference type="GO" id="GO:0001525">
    <property type="term" value="P:angiogenesis"/>
    <property type="evidence" value="ECO:0000318"/>
    <property type="project" value="GO_Central"/>
</dbReference>
<dbReference type="GO" id="GO:0009887">
    <property type="term" value="P:animal organ morphogenesis"/>
    <property type="evidence" value="ECO:0000318"/>
    <property type="project" value="GO_Central"/>
</dbReference>
<dbReference type="GO" id="GO:0007420">
    <property type="term" value="P:brain development"/>
    <property type="evidence" value="ECO:0000318"/>
    <property type="project" value="GO_Central"/>
</dbReference>
<dbReference type="GO" id="GO:0009880">
    <property type="term" value="P:embryonic pattern specification"/>
    <property type="evidence" value="ECO:0000318"/>
    <property type="project" value="GO_Central"/>
</dbReference>
<dbReference type="GO" id="GO:0001654">
    <property type="term" value="P:eye development"/>
    <property type="evidence" value="ECO:0000318"/>
    <property type="project" value="GO_Central"/>
</dbReference>
<dbReference type="GO" id="GO:0030097">
    <property type="term" value="P:hemopoiesis"/>
    <property type="evidence" value="ECO:0000318"/>
    <property type="project" value="GO_Central"/>
</dbReference>
<dbReference type="GO" id="GO:0008284">
    <property type="term" value="P:positive regulation of cell population proliferation"/>
    <property type="evidence" value="ECO:0000318"/>
    <property type="project" value="GO_Central"/>
</dbReference>
<dbReference type="GO" id="GO:0045944">
    <property type="term" value="P:positive regulation of transcription by RNA polymerase II"/>
    <property type="evidence" value="ECO:0000318"/>
    <property type="project" value="GO_Central"/>
</dbReference>
<dbReference type="CDD" id="cd00086">
    <property type="entry name" value="homeodomain"/>
    <property type="match status" value="1"/>
</dbReference>
<dbReference type="FunFam" id="1.10.10.60:FF:000004">
    <property type="entry name" value="Meis2 homeobox isoform 2c"/>
    <property type="match status" value="1"/>
</dbReference>
<dbReference type="Gene3D" id="1.10.10.60">
    <property type="entry name" value="Homeodomain-like"/>
    <property type="match status" value="1"/>
</dbReference>
<dbReference type="InterPro" id="IPR001356">
    <property type="entry name" value="HD"/>
</dbReference>
<dbReference type="InterPro" id="IPR009057">
    <property type="entry name" value="Homeodomain-like_sf"/>
</dbReference>
<dbReference type="InterPro" id="IPR008422">
    <property type="entry name" value="KN_HD"/>
</dbReference>
<dbReference type="InterPro" id="IPR032453">
    <property type="entry name" value="PKNOX/Meis_N"/>
</dbReference>
<dbReference type="InterPro" id="IPR050224">
    <property type="entry name" value="TALE_homeobox"/>
</dbReference>
<dbReference type="PANTHER" id="PTHR11850">
    <property type="entry name" value="HOMEOBOX PROTEIN TRANSCRIPTION FACTORS"/>
    <property type="match status" value="1"/>
</dbReference>
<dbReference type="Pfam" id="PF05920">
    <property type="entry name" value="Homeobox_KN"/>
    <property type="match status" value="1"/>
</dbReference>
<dbReference type="Pfam" id="PF16493">
    <property type="entry name" value="Meis_PKNOX_N"/>
    <property type="match status" value="1"/>
</dbReference>
<dbReference type="SMART" id="SM00389">
    <property type="entry name" value="HOX"/>
    <property type="match status" value="1"/>
</dbReference>
<dbReference type="SUPFAM" id="SSF46689">
    <property type="entry name" value="Homeodomain-like"/>
    <property type="match status" value="1"/>
</dbReference>
<dbReference type="PROSITE" id="PS50071">
    <property type="entry name" value="HOMEOBOX_2"/>
    <property type="match status" value="1"/>
</dbReference>
<comment type="subcellular location">
    <subcellularLocation>
        <location evidence="2">Nucleus</location>
    </subcellularLocation>
</comment>
<comment type="similarity">
    <text evidence="4">Belongs to the TALE/MEIS homeobox family.</text>
</comment>
<comment type="caution">
    <text evidence="4">Could be the product of a pseudogene.</text>
</comment>
<gene>
    <name type="primary">MEIS3P1</name>
</gene>
<sequence>MGPELGWGHPRGGDVCSSDSFNEDNTAFAKQVRSERPFFSSNPELDNLMIQAIQVLRFHLLELEKGKMPIDLVIEDRDGGCREDFEDYPASCPSLPDQNNIWIRDHEDSGSVHLGTPGPSSGGLASQSGDNSSDQGVGLDTSVASPSSGGEDEDLDQEPRRNKKRGIFPKVATNIMRAWLFQHLSHPYPSEEQKKQLAQDTGLTILQVNNWFINARRRIVQPMIDQSNRTGQGAAFSPEGQPIGGYTETEPHVAFRAPASVGMSLNSEGEWHYL</sequence>
<feature type="chain" id="PRO_0000347055" description="Putative homeobox protein Meis3-like 1">
    <location>
        <begin position="1"/>
        <end position="274"/>
    </location>
</feature>
<feature type="domain" description="MEIS N-terminal" evidence="1">
    <location>
        <begin position="12"/>
        <end position="65"/>
    </location>
</feature>
<feature type="DNA-binding region" description="Homeobox" evidence="2">
    <location>
        <begin position="161"/>
        <end position="223"/>
    </location>
</feature>
<feature type="region of interest" description="Disordered" evidence="3">
    <location>
        <begin position="108"/>
        <end position="167"/>
    </location>
</feature>
<feature type="region of interest" description="Disordered" evidence="3">
    <location>
        <begin position="228"/>
        <end position="248"/>
    </location>
</feature>
<feature type="compositionally biased region" description="Polar residues" evidence="3">
    <location>
        <begin position="123"/>
        <end position="135"/>
    </location>
</feature>
<accession>A6NDR6</accession>
<keyword id="KW-0238">DNA-binding</keyword>
<keyword id="KW-0371">Homeobox</keyword>
<keyword id="KW-0539">Nucleus</keyword>
<keyword id="KW-1185">Reference proteome</keyword>
<protein>
    <recommendedName>
        <fullName>Putative homeobox protein Meis3-like 1</fullName>
    </recommendedName>
</protein>
<organism>
    <name type="scientific">Homo sapiens</name>
    <name type="common">Human</name>
    <dbReference type="NCBI Taxonomy" id="9606"/>
    <lineage>
        <taxon>Eukaryota</taxon>
        <taxon>Metazoa</taxon>
        <taxon>Chordata</taxon>
        <taxon>Craniata</taxon>
        <taxon>Vertebrata</taxon>
        <taxon>Euteleostomi</taxon>
        <taxon>Mammalia</taxon>
        <taxon>Eutheria</taxon>
        <taxon>Euarchontoglires</taxon>
        <taxon>Primates</taxon>
        <taxon>Haplorrhini</taxon>
        <taxon>Catarrhini</taxon>
        <taxon>Hominidae</taxon>
        <taxon>Homo</taxon>
    </lineage>
</organism>
<reference key="1">
    <citation type="journal article" date="2006" name="Nature">
        <title>DNA sequence of human chromosome 17 and analysis of rearrangement in the human lineage.</title>
        <authorList>
            <person name="Zody M.C."/>
            <person name="Garber M."/>
            <person name="Adams D.J."/>
            <person name="Sharpe T."/>
            <person name="Harrow J."/>
            <person name="Lupski J.R."/>
            <person name="Nicholson C."/>
            <person name="Searle S.M."/>
            <person name="Wilming L."/>
            <person name="Young S.K."/>
            <person name="Abouelleil A."/>
            <person name="Allen N.R."/>
            <person name="Bi W."/>
            <person name="Bloom T."/>
            <person name="Borowsky M.L."/>
            <person name="Bugalter B.E."/>
            <person name="Butler J."/>
            <person name="Chang J.L."/>
            <person name="Chen C.-K."/>
            <person name="Cook A."/>
            <person name="Corum B."/>
            <person name="Cuomo C.A."/>
            <person name="de Jong P.J."/>
            <person name="DeCaprio D."/>
            <person name="Dewar K."/>
            <person name="FitzGerald M."/>
            <person name="Gilbert J."/>
            <person name="Gibson R."/>
            <person name="Gnerre S."/>
            <person name="Goldstein S."/>
            <person name="Grafham D.V."/>
            <person name="Grocock R."/>
            <person name="Hafez N."/>
            <person name="Hagopian D.S."/>
            <person name="Hart E."/>
            <person name="Norman C.H."/>
            <person name="Humphray S."/>
            <person name="Jaffe D.B."/>
            <person name="Jones M."/>
            <person name="Kamal M."/>
            <person name="Khodiyar V.K."/>
            <person name="LaButti K."/>
            <person name="Laird G."/>
            <person name="Lehoczky J."/>
            <person name="Liu X."/>
            <person name="Lokyitsang T."/>
            <person name="Loveland J."/>
            <person name="Lui A."/>
            <person name="Macdonald P."/>
            <person name="Major J.E."/>
            <person name="Matthews L."/>
            <person name="Mauceli E."/>
            <person name="McCarroll S.A."/>
            <person name="Mihalev A.H."/>
            <person name="Mudge J."/>
            <person name="Nguyen C."/>
            <person name="Nicol R."/>
            <person name="O'Leary S.B."/>
            <person name="Osoegawa K."/>
            <person name="Schwartz D.C."/>
            <person name="Shaw-Smith C."/>
            <person name="Stankiewicz P."/>
            <person name="Steward C."/>
            <person name="Swarbreck D."/>
            <person name="Venkataraman V."/>
            <person name="Whittaker C.A."/>
            <person name="Yang X."/>
            <person name="Zimmer A.R."/>
            <person name="Bradley A."/>
            <person name="Hubbard T."/>
            <person name="Birren B.W."/>
            <person name="Rogers J."/>
            <person name="Lander E.S."/>
            <person name="Nusbaum C."/>
        </authorList>
    </citation>
    <scope>NUCLEOTIDE SEQUENCE [LARGE SCALE GENOMIC DNA]</scope>
</reference>
<proteinExistence type="uncertain"/>